<feature type="chain" id="PRO_0000229146" description="2,3-bisphosphoglycerate-dependent phosphoglycerate mutase">
    <location>
        <begin position="1"/>
        <end position="230"/>
    </location>
</feature>
<feature type="active site" description="Tele-phosphohistidine intermediate" evidence="1">
    <location>
        <position position="9"/>
    </location>
</feature>
<feature type="active site" description="Proton donor/acceptor" evidence="1">
    <location>
        <position position="87"/>
    </location>
</feature>
<feature type="binding site" evidence="1">
    <location>
        <begin position="8"/>
        <end position="15"/>
    </location>
    <ligand>
        <name>substrate</name>
    </ligand>
</feature>
<feature type="binding site" evidence="1">
    <location>
        <begin position="21"/>
        <end position="22"/>
    </location>
    <ligand>
        <name>substrate</name>
    </ligand>
</feature>
<feature type="binding site" evidence="1">
    <location>
        <position position="60"/>
    </location>
    <ligand>
        <name>substrate</name>
    </ligand>
</feature>
<feature type="binding site" evidence="1">
    <location>
        <begin position="87"/>
        <end position="90"/>
    </location>
    <ligand>
        <name>substrate</name>
    </ligand>
</feature>
<feature type="binding site" evidence="1">
    <location>
        <position position="98"/>
    </location>
    <ligand>
        <name>substrate</name>
    </ligand>
</feature>
<feature type="binding site" evidence="1">
    <location>
        <begin position="114"/>
        <end position="115"/>
    </location>
    <ligand>
        <name>substrate</name>
    </ligand>
</feature>
<feature type="binding site" evidence="1">
    <location>
        <begin position="183"/>
        <end position="184"/>
    </location>
    <ligand>
        <name>substrate</name>
    </ligand>
</feature>
<feature type="site" description="Transition state stabilizer" evidence="1">
    <location>
        <position position="182"/>
    </location>
</feature>
<reference key="1">
    <citation type="journal article" date="2004" name="Nat. Biotechnol.">
        <title>Complete sequence and comparative genome analysis of the dairy bacterium Streptococcus thermophilus.</title>
        <authorList>
            <person name="Bolotin A."/>
            <person name="Quinquis B."/>
            <person name="Renault P."/>
            <person name="Sorokin A."/>
            <person name="Ehrlich S.D."/>
            <person name="Kulakauskas S."/>
            <person name="Lapidus A."/>
            <person name="Goltsman E."/>
            <person name="Mazur M."/>
            <person name="Pusch G.D."/>
            <person name="Fonstein M."/>
            <person name="Overbeek R."/>
            <person name="Kyprides N."/>
            <person name="Purnelle B."/>
            <person name="Prozzi D."/>
            <person name="Ngui K."/>
            <person name="Masuy D."/>
            <person name="Hancy F."/>
            <person name="Burteau S."/>
            <person name="Boutry M."/>
            <person name="Delcour J."/>
            <person name="Goffeau A."/>
            <person name="Hols P."/>
        </authorList>
    </citation>
    <scope>NUCLEOTIDE SEQUENCE [LARGE SCALE GENOMIC DNA]</scope>
    <source>
        <strain>CNRZ 1066</strain>
    </source>
</reference>
<keyword id="KW-0312">Gluconeogenesis</keyword>
<keyword id="KW-0324">Glycolysis</keyword>
<keyword id="KW-0413">Isomerase</keyword>
<comment type="function">
    <text evidence="1">Catalyzes the interconversion of 2-phosphoglycerate and 3-phosphoglycerate.</text>
</comment>
<comment type="catalytic activity">
    <reaction evidence="1">
        <text>(2R)-2-phosphoglycerate = (2R)-3-phosphoglycerate</text>
        <dbReference type="Rhea" id="RHEA:15901"/>
        <dbReference type="ChEBI" id="CHEBI:58272"/>
        <dbReference type="ChEBI" id="CHEBI:58289"/>
        <dbReference type="EC" id="5.4.2.11"/>
    </reaction>
</comment>
<comment type="pathway">
    <text evidence="1">Carbohydrate degradation; glycolysis; pyruvate from D-glyceraldehyde 3-phosphate: step 3/5.</text>
</comment>
<comment type="similarity">
    <text evidence="1">Belongs to the phosphoglycerate mutase family. BPG-dependent PGAM subfamily.</text>
</comment>
<evidence type="ECO:0000255" key="1">
    <source>
        <dbReference type="HAMAP-Rule" id="MF_01039"/>
    </source>
</evidence>
<gene>
    <name evidence="1" type="primary">gpmA</name>
    <name type="ordered locus">str1204</name>
</gene>
<name>GPMA_STRT1</name>
<accession>Q5LZF1</accession>
<dbReference type="EC" id="5.4.2.11" evidence="1"/>
<dbReference type="EMBL" id="CP000024">
    <property type="protein sequence ID" value="AAV62749.1"/>
    <property type="molecule type" value="Genomic_DNA"/>
</dbReference>
<dbReference type="RefSeq" id="WP_011226119.1">
    <property type="nucleotide sequence ID" value="NC_006449.1"/>
</dbReference>
<dbReference type="SMR" id="Q5LZF1"/>
<dbReference type="KEGG" id="stc:str1204"/>
<dbReference type="HOGENOM" id="CLU_033323_1_5_9"/>
<dbReference type="UniPathway" id="UPA00109">
    <property type="reaction ID" value="UER00186"/>
</dbReference>
<dbReference type="GO" id="GO:0004619">
    <property type="term" value="F:phosphoglycerate mutase activity"/>
    <property type="evidence" value="ECO:0007669"/>
    <property type="project" value="UniProtKB-EC"/>
</dbReference>
<dbReference type="GO" id="GO:0006094">
    <property type="term" value="P:gluconeogenesis"/>
    <property type="evidence" value="ECO:0007669"/>
    <property type="project" value="UniProtKB-UniRule"/>
</dbReference>
<dbReference type="GO" id="GO:0006096">
    <property type="term" value="P:glycolytic process"/>
    <property type="evidence" value="ECO:0007669"/>
    <property type="project" value="UniProtKB-UniRule"/>
</dbReference>
<dbReference type="CDD" id="cd07067">
    <property type="entry name" value="HP_PGM_like"/>
    <property type="match status" value="1"/>
</dbReference>
<dbReference type="FunFam" id="3.40.50.1240:FF:000003">
    <property type="entry name" value="2,3-bisphosphoglycerate-dependent phosphoglycerate mutase"/>
    <property type="match status" value="1"/>
</dbReference>
<dbReference type="Gene3D" id="3.40.50.1240">
    <property type="entry name" value="Phosphoglycerate mutase-like"/>
    <property type="match status" value="1"/>
</dbReference>
<dbReference type="HAMAP" id="MF_01039">
    <property type="entry name" value="PGAM_GpmA"/>
    <property type="match status" value="1"/>
</dbReference>
<dbReference type="InterPro" id="IPR013078">
    <property type="entry name" value="His_Pase_superF_clade-1"/>
</dbReference>
<dbReference type="InterPro" id="IPR029033">
    <property type="entry name" value="His_PPase_superfam"/>
</dbReference>
<dbReference type="InterPro" id="IPR005952">
    <property type="entry name" value="Phosphogly_mut1"/>
</dbReference>
<dbReference type="NCBIfam" id="TIGR01258">
    <property type="entry name" value="pgm_1"/>
    <property type="match status" value="1"/>
</dbReference>
<dbReference type="NCBIfam" id="NF010713">
    <property type="entry name" value="PRK14115.1"/>
    <property type="match status" value="1"/>
</dbReference>
<dbReference type="NCBIfam" id="NF010715">
    <property type="entry name" value="PRK14117.1"/>
    <property type="match status" value="1"/>
</dbReference>
<dbReference type="PANTHER" id="PTHR11931">
    <property type="entry name" value="PHOSPHOGLYCERATE MUTASE"/>
    <property type="match status" value="1"/>
</dbReference>
<dbReference type="Pfam" id="PF00300">
    <property type="entry name" value="His_Phos_1"/>
    <property type="match status" value="2"/>
</dbReference>
<dbReference type="PIRSF" id="PIRSF000709">
    <property type="entry name" value="6PFK_2-Ptase"/>
    <property type="match status" value="1"/>
</dbReference>
<dbReference type="SMART" id="SM00855">
    <property type="entry name" value="PGAM"/>
    <property type="match status" value="1"/>
</dbReference>
<dbReference type="SUPFAM" id="SSF53254">
    <property type="entry name" value="Phosphoglycerate mutase-like"/>
    <property type="match status" value="1"/>
</dbReference>
<sequence length="230" mass="26190">MVKLVFARHGESEWNKANLFTGWADVDLSEKGTQQAIDAGKLIKEAGIEFDKAYTSVLKRAIKTTNLALEASDQLWVPVEKSWRLNERHYGGLTGKNKAEAAEQFGDEQVHIWRRSYDVLPPKMDRDDEYSAHKDRRYASLDDSVIPDAENLKVTLERALPFWEDKIAPALKDGKNVFVGAHGNSIRALVKHIKKLSDDEIMDVEIPNFPPLVFEFDEKLNVVSEYYLGK</sequence>
<protein>
    <recommendedName>
        <fullName evidence="1">2,3-bisphosphoglycerate-dependent phosphoglycerate mutase</fullName>
        <shortName evidence="1">BPG-dependent PGAM</shortName>
        <shortName evidence="1">PGAM</shortName>
        <shortName evidence="1">Phosphoglyceromutase</shortName>
        <shortName evidence="1">dPGM</shortName>
        <ecNumber evidence="1">5.4.2.11</ecNumber>
    </recommendedName>
</protein>
<organism>
    <name type="scientific">Streptococcus thermophilus (strain CNRZ 1066)</name>
    <dbReference type="NCBI Taxonomy" id="299768"/>
    <lineage>
        <taxon>Bacteria</taxon>
        <taxon>Bacillati</taxon>
        <taxon>Bacillota</taxon>
        <taxon>Bacilli</taxon>
        <taxon>Lactobacillales</taxon>
        <taxon>Streptococcaceae</taxon>
        <taxon>Streptococcus</taxon>
    </lineage>
</organism>
<proteinExistence type="inferred from homology"/>